<organism>
    <name type="scientific">Ruthia magnifica subsp. Calyptogena magnifica</name>
    <dbReference type="NCBI Taxonomy" id="413404"/>
    <lineage>
        <taxon>Bacteria</taxon>
        <taxon>Pseudomonadati</taxon>
        <taxon>Pseudomonadota</taxon>
        <taxon>Gammaproteobacteria</taxon>
        <taxon>Candidatus Pseudothioglobaceae</taxon>
        <taxon>Candidatus Ruthturnera</taxon>
    </lineage>
</organism>
<gene>
    <name evidence="1" type="primary">rplK</name>
    <name type="ordered locus">Rmag_0815</name>
</gene>
<keyword id="KW-0488">Methylation</keyword>
<keyword id="KW-0687">Ribonucleoprotein</keyword>
<keyword id="KW-0689">Ribosomal protein</keyword>
<keyword id="KW-0694">RNA-binding</keyword>
<keyword id="KW-0699">rRNA-binding</keyword>
<proteinExistence type="inferred from homology"/>
<comment type="function">
    <text evidence="1">Forms part of the ribosomal stalk which helps the ribosome interact with GTP-bound translation factors.</text>
</comment>
<comment type="subunit">
    <text evidence="1">Part of the ribosomal stalk of the 50S ribosomal subunit. Interacts with L10 and the large rRNA to form the base of the stalk. L10 forms an elongated spine to which L12 dimers bind in a sequential fashion forming a multimeric L10(L12)X complex.</text>
</comment>
<comment type="PTM">
    <text evidence="1">One or more lysine residues are methylated.</text>
</comment>
<comment type="similarity">
    <text evidence="1">Belongs to the universal ribosomal protein uL11 family.</text>
</comment>
<sequence length="142" mass="15204">MAKKIESYIKLQVAAQEANPSPPVGPALGQHGVNIMEFCKAFNVKTQDIDKGMKVPVVITVYSDRSFTFVTKAPPAALLILKITGIKKGSGVPHLDKVGNITRIQLEEVASMKMKDLNANDMDAAVHIISGTARSMGITVEG</sequence>
<feature type="chain" id="PRO_1000046257" description="Large ribosomal subunit protein uL11">
    <location>
        <begin position="1"/>
        <end position="142"/>
    </location>
</feature>
<protein>
    <recommendedName>
        <fullName evidence="1">Large ribosomal subunit protein uL11</fullName>
    </recommendedName>
    <alternativeName>
        <fullName evidence="2">50S ribosomal protein L11</fullName>
    </alternativeName>
</protein>
<evidence type="ECO:0000255" key="1">
    <source>
        <dbReference type="HAMAP-Rule" id="MF_00736"/>
    </source>
</evidence>
<evidence type="ECO:0000305" key="2"/>
<name>RL11_RUTMC</name>
<dbReference type="EMBL" id="CP000488">
    <property type="protein sequence ID" value="ABL02536.1"/>
    <property type="molecule type" value="Genomic_DNA"/>
</dbReference>
<dbReference type="RefSeq" id="WP_011738161.1">
    <property type="nucleotide sequence ID" value="NC_008610.1"/>
</dbReference>
<dbReference type="SMR" id="A1AX79"/>
<dbReference type="STRING" id="413404.Rmag_0815"/>
<dbReference type="KEGG" id="rma:Rmag_0815"/>
<dbReference type="eggNOG" id="COG0080">
    <property type="taxonomic scope" value="Bacteria"/>
</dbReference>
<dbReference type="HOGENOM" id="CLU_074237_2_1_6"/>
<dbReference type="OrthoDB" id="9802408at2"/>
<dbReference type="Proteomes" id="UP000002587">
    <property type="component" value="Chromosome"/>
</dbReference>
<dbReference type="GO" id="GO:0022625">
    <property type="term" value="C:cytosolic large ribosomal subunit"/>
    <property type="evidence" value="ECO:0007669"/>
    <property type="project" value="TreeGrafter"/>
</dbReference>
<dbReference type="GO" id="GO:0070180">
    <property type="term" value="F:large ribosomal subunit rRNA binding"/>
    <property type="evidence" value="ECO:0007669"/>
    <property type="project" value="UniProtKB-UniRule"/>
</dbReference>
<dbReference type="GO" id="GO:0003735">
    <property type="term" value="F:structural constituent of ribosome"/>
    <property type="evidence" value="ECO:0007669"/>
    <property type="project" value="InterPro"/>
</dbReference>
<dbReference type="GO" id="GO:0006412">
    <property type="term" value="P:translation"/>
    <property type="evidence" value="ECO:0007669"/>
    <property type="project" value="UniProtKB-UniRule"/>
</dbReference>
<dbReference type="CDD" id="cd00349">
    <property type="entry name" value="Ribosomal_L11"/>
    <property type="match status" value="1"/>
</dbReference>
<dbReference type="FunFam" id="1.10.10.250:FF:000001">
    <property type="entry name" value="50S ribosomal protein L11"/>
    <property type="match status" value="1"/>
</dbReference>
<dbReference type="FunFam" id="3.30.1550.10:FF:000001">
    <property type="entry name" value="50S ribosomal protein L11"/>
    <property type="match status" value="1"/>
</dbReference>
<dbReference type="Gene3D" id="1.10.10.250">
    <property type="entry name" value="Ribosomal protein L11, C-terminal domain"/>
    <property type="match status" value="1"/>
</dbReference>
<dbReference type="Gene3D" id="3.30.1550.10">
    <property type="entry name" value="Ribosomal protein L11/L12, N-terminal domain"/>
    <property type="match status" value="1"/>
</dbReference>
<dbReference type="HAMAP" id="MF_00736">
    <property type="entry name" value="Ribosomal_uL11"/>
    <property type="match status" value="1"/>
</dbReference>
<dbReference type="InterPro" id="IPR000911">
    <property type="entry name" value="Ribosomal_uL11"/>
</dbReference>
<dbReference type="InterPro" id="IPR006519">
    <property type="entry name" value="Ribosomal_uL11_bac-typ"/>
</dbReference>
<dbReference type="InterPro" id="IPR020783">
    <property type="entry name" value="Ribosomal_uL11_C"/>
</dbReference>
<dbReference type="InterPro" id="IPR036769">
    <property type="entry name" value="Ribosomal_uL11_C_sf"/>
</dbReference>
<dbReference type="InterPro" id="IPR020784">
    <property type="entry name" value="Ribosomal_uL11_N"/>
</dbReference>
<dbReference type="InterPro" id="IPR036796">
    <property type="entry name" value="Ribosomal_uL11_N_sf"/>
</dbReference>
<dbReference type="NCBIfam" id="TIGR01632">
    <property type="entry name" value="L11_bact"/>
    <property type="match status" value="1"/>
</dbReference>
<dbReference type="PANTHER" id="PTHR11661">
    <property type="entry name" value="60S RIBOSOMAL PROTEIN L12"/>
    <property type="match status" value="1"/>
</dbReference>
<dbReference type="PANTHER" id="PTHR11661:SF1">
    <property type="entry name" value="LARGE RIBOSOMAL SUBUNIT PROTEIN UL11M"/>
    <property type="match status" value="1"/>
</dbReference>
<dbReference type="Pfam" id="PF00298">
    <property type="entry name" value="Ribosomal_L11"/>
    <property type="match status" value="1"/>
</dbReference>
<dbReference type="Pfam" id="PF03946">
    <property type="entry name" value="Ribosomal_L11_N"/>
    <property type="match status" value="1"/>
</dbReference>
<dbReference type="SMART" id="SM00649">
    <property type="entry name" value="RL11"/>
    <property type="match status" value="1"/>
</dbReference>
<dbReference type="SUPFAM" id="SSF54747">
    <property type="entry name" value="Ribosomal L11/L12e N-terminal domain"/>
    <property type="match status" value="1"/>
</dbReference>
<dbReference type="SUPFAM" id="SSF46906">
    <property type="entry name" value="Ribosomal protein L11, C-terminal domain"/>
    <property type="match status" value="1"/>
</dbReference>
<reference key="1">
    <citation type="journal article" date="2007" name="Science">
        <title>The Calyptogena magnifica chemoautotrophic symbiont genome.</title>
        <authorList>
            <person name="Newton I.L.G."/>
            <person name="Woyke T."/>
            <person name="Auchtung T.A."/>
            <person name="Dilly G.F."/>
            <person name="Dutton R.J."/>
            <person name="Fisher M.C."/>
            <person name="Fontanez K.M."/>
            <person name="Lau E."/>
            <person name="Stewart F.J."/>
            <person name="Richardson P.M."/>
            <person name="Barry K.W."/>
            <person name="Saunders E."/>
            <person name="Detter J.C."/>
            <person name="Wu D."/>
            <person name="Eisen J.A."/>
            <person name="Cavanaugh C.M."/>
        </authorList>
    </citation>
    <scope>NUCLEOTIDE SEQUENCE [LARGE SCALE GENOMIC DNA]</scope>
</reference>
<accession>A1AX79</accession>